<keyword id="KW-0175">Coiled coil</keyword>
<keyword id="KW-0539">Nucleus</keyword>
<keyword id="KW-0698">rRNA processing</keyword>
<feature type="chain" id="PRO_0000330285" description="rRNA-processing protein EFG1">
    <location>
        <begin position="1"/>
        <end position="233"/>
    </location>
</feature>
<feature type="region of interest" description="Disordered" evidence="3">
    <location>
        <begin position="194"/>
        <end position="233"/>
    </location>
</feature>
<feature type="coiled-coil region" evidence="2">
    <location>
        <begin position="26"/>
        <end position="109"/>
    </location>
</feature>
<feature type="compositionally biased region" description="Acidic residues" evidence="3">
    <location>
        <begin position="223"/>
        <end position="233"/>
    </location>
</feature>
<reference key="1">
    <citation type="journal article" date="2007" name="Proc. Natl. Acad. Sci. U.S.A.">
        <title>Genome sequencing and comparative analysis of Saccharomyces cerevisiae strain YJM789.</title>
        <authorList>
            <person name="Wei W."/>
            <person name="McCusker J.H."/>
            <person name="Hyman R.W."/>
            <person name="Jones T."/>
            <person name="Ning Y."/>
            <person name="Cao Z."/>
            <person name="Gu Z."/>
            <person name="Bruno D."/>
            <person name="Miranda M."/>
            <person name="Nguyen M."/>
            <person name="Wilhelmy J."/>
            <person name="Komp C."/>
            <person name="Tamse R."/>
            <person name="Wang X."/>
            <person name="Jia P."/>
            <person name="Luedi P."/>
            <person name="Oefner P.J."/>
            <person name="David L."/>
            <person name="Dietrich F.S."/>
            <person name="Li Y."/>
            <person name="Davis R.W."/>
            <person name="Steinmetz L.M."/>
        </authorList>
    </citation>
    <scope>NUCLEOTIDE SEQUENCE [LARGE SCALE GENOMIC DNA]</scope>
    <source>
        <strain>YJM789</strain>
    </source>
</reference>
<proteinExistence type="inferred from homology"/>
<dbReference type="EMBL" id="AAFW02000100">
    <property type="protein sequence ID" value="EDN61855.1"/>
    <property type="molecule type" value="Genomic_DNA"/>
</dbReference>
<dbReference type="SMR" id="A6ZUS8"/>
<dbReference type="HOGENOM" id="CLU_066912_2_0_1"/>
<dbReference type="Proteomes" id="UP000007060">
    <property type="component" value="Unassembled WGS sequence"/>
</dbReference>
<dbReference type="GO" id="GO:0005730">
    <property type="term" value="C:nucleolus"/>
    <property type="evidence" value="ECO:0007669"/>
    <property type="project" value="UniProtKB-SubCell"/>
</dbReference>
<dbReference type="GO" id="GO:0030688">
    <property type="term" value="C:preribosome, small subunit precursor"/>
    <property type="evidence" value="ECO:0007669"/>
    <property type="project" value="TreeGrafter"/>
</dbReference>
<dbReference type="GO" id="GO:0000462">
    <property type="term" value="P:maturation of SSU-rRNA from tricistronic rRNA transcript (SSU-rRNA, 5.8S rRNA, LSU-rRNA)"/>
    <property type="evidence" value="ECO:0007669"/>
    <property type="project" value="TreeGrafter"/>
</dbReference>
<dbReference type="InterPro" id="IPR019310">
    <property type="entry name" value="Efg1"/>
</dbReference>
<dbReference type="InterPro" id="IPR050786">
    <property type="entry name" value="EFG1_rRNA-proc"/>
</dbReference>
<dbReference type="PANTHER" id="PTHR33911">
    <property type="entry name" value="RRNA-PROCESSING PROTEIN EFG1"/>
    <property type="match status" value="1"/>
</dbReference>
<dbReference type="PANTHER" id="PTHR33911:SF1">
    <property type="entry name" value="RRNA-PROCESSING PROTEIN EFG1"/>
    <property type="match status" value="1"/>
</dbReference>
<dbReference type="Pfam" id="PF10153">
    <property type="entry name" value="Efg1"/>
    <property type="match status" value="1"/>
</dbReference>
<evidence type="ECO:0000250" key="1"/>
<evidence type="ECO:0000255" key="2"/>
<evidence type="ECO:0000256" key="3">
    <source>
        <dbReference type="SAM" id="MobiDB-lite"/>
    </source>
</evidence>
<evidence type="ECO:0000305" key="4"/>
<name>EFG1P_YEAS7</name>
<organism>
    <name type="scientific">Saccharomyces cerevisiae (strain YJM789)</name>
    <name type="common">Baker's yeast</name>
    <dbReference type="NCBI Taxonomy" id="307796"/>
    <lineage>
        <taxon>Eukaryota</taxon>
        <taxon>Fungi</taxon>
        <taxon>Dikarya</taxon>
        <taxon>Ascomycota</taxon>
        <taxon>Saccharomycotina</taxon>
        <taxon>Saccharomycetes</taxon>
        <taxon>Saccharomycetales</taxon>
        <taxon>Saccharomycetaceae</taxon>
        <taxon>Saccharomyces</taxon>
    </lineage>
</organism>
<comment type="function">
    <text evidence="1">Involved in rRNA processing. Required growth at elevated temperatures, resistance to hydroxyurea and for cell cycle progression (By similarity).</text>
</comment>
<comment type="subcellular location">
    <subcellularLocation>
        <location evidence="1">Nucleus</location>
        <location evidence="1">Nucleolus</location>
    </subcellularLocation>
</comment>
<comment type="similarity">
    <text evidence="4">Belongs to the EFG1 family.</text>
</comment>
<accession>A6ZUS8</accession>
<gene>
    <name type="primary">EFG1</name>
    <name type="ORF">SCY_2161</name>
</gene>
<sequence>MAKLQRKRSKALGSSLEMSQIMDAGTNKIKRRIRDLERLLKKKKDILPSTVIIEKERNLQALRLELQNNELKNKIKANAKKYHMVRFFEKKKALRKYNRLLKKIKESGADDKDLQQKLRATKIELCYVINFPKTEKYIALYPNDTPSTDPKGVELTNLRREQFLKLVAERMDANTLNVSFEEILKGKKLDEDSIGLTLSPDKDHEDGSQVSPTQDRKELDQVVGEDEKDDFFE</sequence>
<protein>
    <recommendedName>
        <fullName>rRNA-processing protein EFG1</fullName>
    </recommendedName>
    <alternativeName>
        <fullName>Exit from G1 protein 1</fullName>
    </alternativeName>
</protein>